<feature type="chain" id="PRO_0000278378" description="DNA ligase 4">
    <location>
        <begin position="1"/>
        <end position="946"/>
    </location>
</feature>
<feature type="domain" description="BRCT 1" evidence="4">
    <location>
        <begin position="688"/>
        <end position="787"/>
    </location>
</feature>
<feature type="domain" description="BRCT 2" evidence="4">
    <location>
        <begin position="845"/>
        <end position="945"/>
    </location>
</feature>
<feature type="active site" description="N6-AMP-lysine intermediate" evidence="5">
    <location>
        <position position="297"/>
    </location>
</feature>
<feature type="binding site" evidence="1">
    <location>
        <position position="295"/>
    </location>
    <ligand>
        <name>ATP</name>
        <dbReference type="ChEBI" id="CHEBI:30616"/>
    </ligand>
</feature>
<feature type="binding site" evidence="1">
    <location>
        <position position="297"/>
    </location>
    <ligand>
        <name>ATP</name>
        <dbReference type="ChEBI" id="CHEBI:30616"/>
    </ligand>
</feature>
<feature type="binding site" evidence="1">
    <location>
        <position position="302"/>
    </location>
    <ligand>
        <name>ATP</name>
        <dbReference type="ChEBI" id="CHEBI:30616"/>
    </ligand>
</feature>
<feature type="binding site" evidence="1">
    <location>
        <position position="355"/>
    </location>
    <ligand>
        <name>ATP</name>
        <dbReference type="ChEBI" id="CHEBI:30616"/>
    </ligand>
</feature>
<feature type="binding site" evidence="3">
    <location>
        <position position="355"/>
    </location>
    <ligand>
        <name>Mg(2+)</name>
        <dbReference type="ChEBI" id="CHEBI:18420"/>
        <label>1</label>
    </ligand>
</feature>
<feature type="binding site" evidence="1">
    <location>
        <position position="397"/>
    </location>
    <ligand>
        <name>ATP</name>
        <dbReference type="ChEBI" id="CHEBI:30616"/>
    </ligand>
</feature>
<feature type="binding site" evidence="1">
    <location>
        <position position="457"/>
    </location>
    <ligand>
        <name>ATP</name>
        <dbReference type="ChEBI" id="CHEBI:30616"/>
    </ligand>
</feature>
<feature type="binding site" evidence="3">
    <location>
        <position position="457"/>
    </location>
    <ligand>
        <name>Mg(2+)</name>
        <dbReference type="ChEBI" id="CHEBI:18420"/>
        <label>2</label>
    </ligand>
</feature>
<feature type="binding site" evidence="1">
    <location>
        <position position="462"/>
    </location>
    <ligand>
        <name>ATP</name>
        <dbReference type="ChEBI" id="CHEBI:30616"/>
    </ligand>
</feature>
<feature type="binding site" evidence="1">
    <location>
        <position position="479"/>
    </location>
    <ligand>
        <name>ATP</name>
        <dbReference type="ChEBI" id="CHEBI:30616"/>
    </ligand>
</feature>
<feature type="binding site" evidence="1">
    <location>
        <position position="481"/>
    </location>
    <ligand>
        <name>ATP</name>
        <dbReference type="ChEBI" id="CHEBI:30616"/>
    </ligand>
</feature>
<gene>
    <name type="primary">LIG4</name>
    <name type="ordered locus">CAGL0E02695g</name>
</gene>
<keyword id="KW-0067">ATP-binding</keyword>
<keyword id="KW-0227">DNA damage</keyword>
<keyword id="KW-0233">DNA recombination</keyword>
<keyword id="KW-0234">DNA repair</keyword>
<keyword id="KW-0436">Ligase</keyword>
<keyword id="KW-0460">Magnesium</keyword>
<keyword id="KW-0479">Metal-binding</keyword>
<keyword id="KW-0547">Nucleotide-binding</keyword>
<keyword id="KW-0539">Nucleus</keyword>
<keyword id="KW-1185">Reference proteome</keyword>
<keyword id="KW-0677">Repeat</keyword>
<name>DNLI4_CANGA</name>
<evidence type="ECO:0000250" key="1">
    <source>
        <dbReference type="UniProtKB" id="P49917"/>
    </source>
</evidence>
<evidence type="ECO:0000250" key="2">
    <source>
        <dbReference type="UniProtKB" id="Q08387"/>
    </source>
</evidence>
<evidence type="ECO:0000255" key="3"/>
<evidence type="ECO:0000255" key="4">
    <source>
        <dbReference type="PROSITE-ProRule" id="PRU00033"/>
    </source>
</evidence>
<evidence type="ECO:0000255" key="5">
    <source>
        <dbReference type="PROSITE-ProRule" id="PRU10135"/>
    </source>
</evidence>
<evidence type="ECO:0000305" key="6"/>
<proteinExistence type="inferred from homology"/>
<reference key="1">
    <citation type="journal article" date="2004" name="Nature">
        <title>Genome evolution in yeasts.</title>
        <authorList>
            <person name="Dujon B."/>
            <person name="Sherman D."/>
            <person name="Fischer G."/>
            <person name="Durrens P."/>
            <person name="Casaregola S."/>
            <person name="Lafontaine I."/>
            <person name="de Montigny J."/>
            <person name="Marck C."/>
            <person name="Neuveglise C."/>
            <person name="Talla E."/>
            <person name="Goffard N."/>
            <person name="Frangeul L."/>
            <person name="Aigle M."/>
            <person name="Anthouard V."/>
            <person name="Babour A."/>
            <person name="Barbe V."/>
            <person name="Barnay S."/>
            <person name="Blanchin S."/>
            <person name="Beckerich J.-M."/>
            <person name="Beyne E."/>
            <person name="Bleykasten C."/>
            <person name="Boisrame A."/>
            <person name="Boyer J."/>
            <person name="Cattolico L."/>
            <person name="Confanioleri F."/>
            <person name="de Daruvar A."/>
            <person name="Despons L."/>
            <person name="Fabre E."/>
            <person name="Fairhead C."/>
            <person name="Ferry-Dumazet H."/>
            <person name="Groppi A."/>
            <person name="Hantraye F."/>
            <person name="Hennequin C."/>
            <person name="Jauniaux N."/>
            <person name="Joyet P."/>
            <person name="Kachouri R."/>
            <person name="Kerrest A."/>
            <person name="Koszul R."/>
            <person name="Lemaire M."/>
            <person name="Lesur I."/>
            <person name="Ma L."/>
            <person name="Muller H."/>
            <person name="Nicaud J.-M."/>
            <person name="Nikolski M."/>
            <person name="Oztas S."/>
            <person name="Ozier-Kalogeropoulos O."/>
            <person name="Pellenz S."/>
            <person name="Potier S."/>
            <person name="Richard G.-F."/>
            <person name="Straub M.-L."/>
            <person name="Suleau A."/>
            <person name="Swennen D."/>
            <person name="Tekaia F."/>
            <person name="Wesolowski-Louvel M."/>
            <person name="Westhof E."/>
            <person name="Wirth B."/>
            <person name="Zeniou-Meyer M."/>
            <person name="Zivanovic Y."/>
            <person name="Bolotin-Fukuhara M."/>
            <person name="Thierry A."/>
            <person name="Bouchier C."/>
            <person name="Caudron B."/>
            <person name="Scarpelli C."/>
            <person name="Gaillardin C."/>
            <person name="Weissenbach J."/>
            <person name="Wincker P."/>
            <person name="Souciet J.-L."/>
        </authorList>
    </citation>
    <scope>NUCLEOTIDE SEQUENCE [LARGE SCALE GENOMIC DNA]</scope>
    <source>
        <strain>ATCC 2001 / BCRC 20586 / JCM 3761 / NBRC 0622 / NRRL Y-65 / CBS 138</strain>
    </source>
</reference>
<sequence length="946" mass="109554">MADEGGLETGAHDELKGTEEQAVNFAPSPDFLWLCEQLFAKIDHVQFERANNLLTKPVTARYYEVISNFTTLWRTTVGNNIYPALRLILPYRDRRVFNIKDYTLIKAICAFLKLPKDSSTEKKLINWKQDAGRSVRLSKFCVEEIKKRRSEPQIDRNERITIDDLNGYLDQLAIERTEQGRSFKNLANSDIMNKCLTSMTFLEMQYFFDILLKNRPLGGHEHKLLNCWHPDAQDYLSVVSDLETVAKRLWDPSQRLGNQDLKINIGLAFAPQLATKLHVSYQKIGEKLGWDFFIEEKMDGERIQMHYTNFGSDIKFYSRRATDYTYLYGNNLKTGTLANFINLNKNVKDCVLDCEVVTFDSNNKIVLPFGMVKSSAKNMLSQDGIDTQGFHPLLMVFDVLYLNGATLVDLPYYKRREYLKQILTPTAHRIEIIKSIRANDEQMIKKSLEKALSVGSEGIILKRYDSRYVIASRSDDWIKIKPEYLEQFGENMDLVLMGRDPSKKDSLMLGLLDYEEVIQDSPIMVNSQSSEENSQRFRGFVSLCIIANGISNEEYKEIDRKTKGLWNDSEKIPPLEYMKFGSKVPRQWIDPKKSLILEIKARSLDNTRSSERKFAAGCTLFGGYCRQIREDKNWKTCYTLQEFERAKSGNNWRKRGSSKPQKVISKKRRYNIISSVNKALEDFAELEHRSDIFDGMYFYVLSDYFDGVKRKRIKKSEIQKVIVANGGQLVQNVITRNYNLNDLRIISSRNTVECNSLIVRGYDIISPKWVFDCLLSGKIMKLEPSHCFNFSKQLMDYAYKRIDQYGDPYERDINKYEWSSLTSEKICTTAKQQPDVQFDNSLMDVPHFLFHGRIVFLLSDNNNIQKESFMVDAYGGKVTNELSSANLVIVVGAVTQRRINDIRKQISSEVIKQDHPPRIPDMVSEGWLYDCIKQNTQVAEDNYRLP</sequence>
<protein>
    <recommendedName>
        <fullName>DNA ligase 4</fullName>
        <ecNumber evidence="2">6.5.1.1</ecNumber>
    </recommendedName>
    <alternativeName>
        <fullName>DNA ligase IV</fullName>
    </alternativeName>
    <alternativeName>
        <fullName>Polydeoxyribonucleotide synthase [ATP] 4</fullName>
    </alternativeName>
</protein>
<accession>Q6FVD8</accession>
<dbReference type="EC" id="6.5.1.1" evidence="2"/>
<dbReference type="EMBL" id="CR380951">
    <property type="protein sequence ID" value="CAG58725.1"/>
    <property type="molecule type" value="Genomic_DNA"/>
</dbReference>
<dbReference type="RefSeq" id="XP_445806.1">
    <property type="nucleotide sequence ID" value="XM_445806.1"/>
</dbReference>
<dbReference type="SMR" id="Q6FVD8"/>
<dbReference type="FunCoup" id="Q6FVD8">
    <property type="interactions" value="613"/>
</dbReference>
<dbReference type="STRING" id="284593.Q6FVD8"/>
<dbReference type="EnsemblFungi" id="CAGL0E02695g-T">
    <property type="protein sequence ID" value="CAGL0E02695g-T-p1"/>
    <property type="gene ID" value="CAGL0E02695g"/>
</dbReference>
<dbReference type="GeneID" id="2887446"/>
<dbReference type="KEGG" id="cgr:2887446"/>
<dbReference type="CGD" id="CAL0129066">
    <property type="gene designation" value="LIG4"/>
</dbReference>
<dbReference type="VEuPathDB" id="FungiDB:B1J91_E02695g"/>
<dbReference type="VEuPathDB" id="FungiDB:CAGL0E02695g"/>
<dbReference type="eggNOG" id="KOG0966">
    <property type="taxonomic scope" value="Eukaryota"/>
</dbReference>
<dbReference type="HOGENOM" id="CLU_004844_1_1_1"/>
<dbReference type="InParanoid" id="Q6FVD8"/>
<dbReference type="OMA" id="EGIMIKH"/>
<dbReference type="Proteomes" id="UP000002428">
    <property type="component" value="Chromosome E"/>
</dbReference>
<dbReference type="GO" id="GO:0032807">
    <property type="term" value="C:DNA ligase IV complex"/>
    <property type="evidence" value="ECO:0007669"/>
    <property type="project" value="EnsemblFungi"/>
</dbReference>
<dbReference type="GO" id="GO:0005524">
    <property type="term" value="F:ATP binding"/>
    <property type="evidence" value="ECO:0007669"/>
    <property type="project" value="UniProtKB-KW"/>
</dbReference>
<dbReference type="GO" id="GO:0003677">
    <property type="term" value="F:DNA binding"/>
    <property type="evidence" value="ECO:0007669"/>
    <property type="project" value="InterPro"/>
</dbReference>
<dbReference type="GO" id="GO:0003910">
    <property type="term" value="F:DNA ligase (ATP) activity"/>
    <property type="evidence" value="ECO:0000250"/>
    <property type="project" value="UniProtKB"/>
</dbReference>
<dbReference type="GO" id="GO:0046872">
    <property type="term" value="F:metal ion binding"/>
    <property type="evidence" value="ECO:0007669"/>
    <property type="project" value="UniProtKB-KW"/>
</dbReference>
<dbReference type="GO" id="GO:0071897">
    <property type="term" value="P:DNA biosynthetic process"/>
    <property type="evidence" value="ECO:0007669"/>
    <property type="project" value="InterPro"/>
</dbReference>
<dbReference type="GO" id="GO:0006310">
    <property type="term" value="P:DNA recombination"/>
    <property type="evidence" value="ECO:0007669"/>
    <property type="project" value="UniProtKB-KW"/>
</dbReference>
<dbReference type="GO" id="GO:0097680">
    <property type="term" value="P:double-strand break repair via classical nonhomologous end joining"/>
    <property type="evidence" value="ECO:0000250"/>
    <property type="project" value="UniProtKB"/>
</dbReference>
<dbReference type="GO" id="GO:0043007">
    <property type="term" value="P:maintenance of rDNA"/>
    <property type="evidence" value="ECO:0007669"/>
    <property type="project" value="EnsemblFungi"/>
</dbReference>
<dbReference type="GO" id="GO:0006297">
    <property type="term" value="P:nucleotide-excision repair, DNA gap filling"/>
    <property type="evidence" value="ECO:0007669"/>
    <property type="project" value="TreeGrafter"/>
</dbReference>
<dbReference type="CDD" id="cd07903">
    <property type="entry name" value="Adenylation_DNA_ligase_IV"/>
    <property type="match status" value="1"/>
</dbReference>
<dbReference type="CDD" id="cd07968">
    <property type="entry name" value="OBF_DNA_ligase_IV"/>
    <property type="match status" value="1"/>
</dbReference>
<dbReference type="Gene3D" id="3.40.50.10190">
    <property type="entry name" value="BRCT domain"/>
    <property type="match status" value="2"/>
</dbReference>
<dbReference type="Gene3D" id="1.10.3260.10">
    <property type="entry name" value="DNA ligase, ATP-dependent, N-terminal domain"/>
    <property type="match status" value="1"/>
</dbReference>
<dbReference type="Gene3D" id="3.30.470.30">
    <property type="entry name" value="DNA ligase/mRNA capping enzyme"/>
    <property type="match status" value="1"/>
</dbReference>
<dbReference type="Gene3D" id="2.40.50.140">
    <property type="entry name" value="Nucleic acid-binding proteins"/>
    <property type="match status" value="1"/>
</dbReference>
<dbReference type="InterPro" id="IPR044125">
    <property type="entry name" value="Adenylation_DNA_ligase_IV"/>
</dbReference>
<dbReference type="InterPro" id="IPR001357">
    <property type="entry name" value="BRCT_dom"/>
</dbReference>
<dbReference type="InterPro" id="IPR036420">
    <property type="entry name" value="BRCT_dom_sf"/>
</dbReference>
<dbReference type="InterPro" id="IPR000977">
    <property type="entry name" value="DNA_ligase_ATP-dep"/>
</dbReference>
<dbReference type="InterPro" id="IPR012310">
    <property type="entry name" value="DNA_ligase_ATP-dep_cent"/>
</dbReference>
<dbReference type="InterPro" id="IPR016059">
    <property type="entry name" value="DNA_ligase_ATP-dep_CS"/>
</dbReference>
<dbReference type="InterPro" id="IPR012308">
    <property type="entry name" value="DNA_ligase_ATP-dep_N"/>
</dbReference>
<dbReference type="InterPro" id="IPR036599">
    <property type="entry name" value="DNA_ligase_N_sf"/>
</dbReference>
<dbReference type="InterPro" id="IPR029710">
    <property type="entry name" value="LIG4"/>
</dbReference>
<dbReference type="InterPro" id="IPR012340">
    <property type="entry name" value="NA-bd_OB-fold"/>
</dbReference>
<dbReference type="NCBIfam" id="TIGR00574">
    <property type="entry name" value="dnl1"/>
    <property type="match status" value="1"/>
</dbReference>
<dbReference type="PANTHER" id="PTHR45997">
    <property type="entry name" value="DNA LIGASE 4"/>
    <property type="match status" value="1"/>
</dbReference>
<dbReference type="PANTHER" id="PTHR45997:SF1">
    <property type="entry name" value="DNA LIGASE 4"/>
    <property type="match status" value="1"/>
</dbReference>
<dbReference type="Pfam" id="PF16589">
    <property type="entry name" value="BRCT_2"/>
    <property type="match status" value="1"/>
</dbReference>
<dbReference type="Pfam" id="PF01068">
    <property type="entry name" value="DNA_ligase_A_M"/>
    <property type="match status" value="1"/>
</dbReference>
<dbReference type="Pfam" id="PF04675">
    <property type="entry name" value="DNA_ligase_A_N"/>
    <property type="match status" value="1"/>
</dbReference>
<dbReference type="SMART" id="SM00292">
    <property type="entry name" value="BRCT"/>
    <property type="match status" value="2"/>
</dbReference>
<dbReference type="SUPFAM" id="SSF52113">
    <property type="entry name" value="BRCT domain"/>
    <property type="match status" value="2"/>
</dbReference>
<dbReference type="SUPFAM" id="SSF56091">
    <property type="entry name" value="DNA ligase/mRNA capping enzyme, catalytic domain"/>
    <property type="match status" value="1"/>
</dbReference>
<dbReference type="SUPFAM" id="SSF50249">
    <property type="entry name" value="Nucleic acid-binding proteins"/>
    <property type="match status" value="1"/>
</dbReference>
<dbReference type="PROSITE" id="PS50172">
    <property type="entry name" value="BRCT"/>
    <property type="match status" value="2"/>
</dbReference>
<dbReference type="PROSITE" id="PS00697">
    <property type="entry name" value="DNA_LIGASE_A1"/>
    <property type="match status" value="1"/>
</dbReference>
<dbReference type="PROSITE" id="PS50160">
    <property type="entry name" value="DNA_LIGASE_A3"/>
    <property type="match status" value="1"/>
</dbReference>
<comment type="function">
    <text evidence="2">DNA ligase involved in DNA non-homologous end joining (NHEJ); required for double-strand break (DSB) repair.</text>
</comment>
<comment type="catalytic activity">
    <reaction evidence="5">
        <text>ATP + (deoxyribonucleotide)n-3'-hydroxyl + 5'-phospho-(deoxyribonucleotide)m = (deoxyribonucleotide)n+m + AMP + diphosphate.</text>
        <dbReference type="EC" id="6.5.1.1"/>
    </reaction>
</comment>
<comment type="cofactor">
    <cofactor evidence="1">
        <name>Mg(2+)</name>
        <dbReference type="ChEBI" id="CHEBI:18420"/>
    </cofactor>
</comment>
<comment type="subcellular location">
    <subcellularLocation>
        <location evidence="2">Nucleus</location>
    </subcellularLocation>
</comment>
<comment type="similarity">
    <text evidence="6">Belongs to the ATP-dependent DNA ligase family.</text>
</comment>
<organism>
    <name type="scientific">Candida glabrata (strain ATCC 2001 / BCRC 20586 / JCM 3761 / NBRC 0622 / NRRL Y-65 / CBS 138)</name>
    <name type="common">Yeast</name>
    <name type="synonym">Nakaseomyces glabratus</name>
    <dbReference type="NCBI Taxonomy" id="284593"/>
    <lineage>
        <taxon>Eukaryota</taxon>
        <taxon>Fungi</taxon>
        <taxon>Dikarya</taxon>
        <taxon>Ascomycota</taxon>
        <taxon>Saccharomycotina</taxon>
        <taxon>Saccharomycetes</taxon>
        <taxon>Saccharomycetales</taxon>
        <taxon>Saccharomycetaceae</taxon>
        <taxon>Nakaseomyces</taxon>
    </lineage>
</organism>